<sequence>MSGHSKWATIKRKKDAIDSKRGAIFTRVGKEITVAAKMGGGDPEGNPRLRLAILKAKSVNMPKDNIERAIKKGTGELEGVVYEECLYECFGPAGIAIMVSAVTDKKSRTTPEIKSILTKLGGSLATSGSVSRLFEKKGVIVLESSQIGEDKLVDLAVGEGAEDVINEGEVYRVITTPDDYESVLHALNEKGLKSEESEIRYIALISSEIADKEVAKKVMKLIEQLDGHDDVTSVTSNFELAASLEKEFE</sequence>
<reference key="1">
    <citation type="journal article" date="2006" name="Proc. Natl. Acad. Sci. U.S.A.">
        <title>Genome reduction in Leptospira borgpetersenii reflects limited transmission potential.</title>
        <authorList>
            <person name="Bulach D.M."/>
            <person name="Zuerner R.L."/>
            <person name="Wilson P."/>
            <person name="Seemann T."/>
            <person name="McGrath A."/>
            <person name="Cullen P.A."/>
            <person name="Davis J."/>
            <person name="Johnson M."/>
            <person name="Kuczek E."/>
            <person name="Alt D.P."/>
            <person name="Peterson-Burch B."/>
            <person name="Coppel R.L."/>
            <person name="Rood J.I."/>
            <person name="Davies J.K."/>
            <person name="Adler B."/>
        </authorList>
    </citation>
    <scope>NUCLEOTIDE SEQUENCE [LARGE SCALE GENOMIC DNA]</scope>
    <source>
        <strain>L550</strain>
    </source>
</reference>
<comment type="subcellular location">
    <subcellularLocation>
        <location evidence="1">Cytoplasm</location>
    </subcellularLocation>
</comment>
<comment type="similarity">
    <text evidence="1">Belongs to the TACO1 family.</text>
</comment>
<feature type="chain" id="PRO_1000045331" description="Probable transcriptional regulatory protein LBL_2537">
    <location>
        <begin position="1"/>
        <end position="249"/>
    </location>
</feature>
<organism>
    <name type="scientific">Leptospira borgpetersenii serovar Hardjo-bovis (strain L550)</name>
    <dbReference type="NCBI Taxonomy" id="355276"/>
    <lineage>
        <taxon>Bacteria</taxon>
        <taxon>Pseudomonadati</taxon>
        <taxon>Spirochaetota</taxon>
        <taxon>Spirochaetia</taxon>
        <taxon>Leptospirales</taxon>
        <taxon>Leptospiraceae</taxon>
        <taxon>Leptospira</taxon>
    </lineage>
</organism>
<evidence type="ECO:0000255" key="1">
    <source>
        <dbReference type="HAMAP-Rule" id="MF_00693"/>
    </source>
</evidence>
<gene>
    <name type="ordered locus">LBL_2537</name>
</gene>
<accession>Q04YE4</accession>
<name>Y2537_LEPBL</name>
<protein>
    <recommendedName>
        <fullName evidence="1">Probable transcriptional regulatory protein LBL_2537</fullName>
    </recommendedName>
</protein>
<proteinExistence type="inferred from homology"/>
<dbReference type="EMBL" id="CP000348">
    <property type="protein sequence ID" value="ABJ79901.1"/>
    <property type="molecule type" value="Genomic_DNA"/>
</dbReference>
<dbReference type="RefSeq" id="WP_011670868.1">
    <property type="nucleotide sequence ID" value="NC_008508.1"/>
</dbReference>
<dbReference type="SMR" id="Q04YE4"/>
<dbReference type="KEGG" id="lbl:LBL_2537"/>
<dbReference type="PATRIC" id="fig|355276.3.peg.3260"/>
<dbReference type="HOGENOM" id="CLU_062974_2_2_12"/>
<dbReference type="GO" id="GO:0005829">
    <property type="term" value="C:cytosol"/>
    <property type="evidence" value="ECO:0007669"/>
    <property type="project" value="TreeGrafter"/>
</dbReference>
<dbReference type="GO" id="GO:0003677">
    <property type="term" value="F:DNA binding"/>
    <property type="evidence" value="ECO:0007669"/>
    <property type="project" value="UniProtKB-UniRule"/>
</dbReference>
<dbReference type="GO" id="GO:0006355">
    <property type="term" value="P:regulation of DNA-templated transcription"/>
    <property type="evidence" value="ECO:0007669"/>
    <property type="project" value="UniProtKB-UniRule"/>
</dbReference>
<dbReference type="FunFam" id="1.10.10.200:FF:000002">
    <property type="entry name" value="Probable transcriptional regulatory protein CLM62_37755"/>
    <property type="match status" value="1"/>
</dbReference>
<dbReference type="Gene3D" id="1.10.10.200">
    <property type="match status" value="1"/>
</dbReference>
<dbReference type="Gene3D" id="3.30.70.980">
    <property type="match status" value="2"/>
</dbReference>
<dbReference type="HAMAP" id="MF_00693">
    <property type="entry name" value="Transcrip_reg_TACO1"/>
    <property type="match status" value="1"/>
</dbReference>
<dbReference type="InterPro" id="IPR017856">
    <property type="entry name" value="Integrase-like_N"/>
</dbReference>
<dbReference type="InterPro" id="IPR048300">
    <property type="entry name" value="TACO1_YebC-like_2nd/3rd_dom"/>
</dbReference>
<dbReference type="InterPro" id="IPR049083">
    <property type="entry name" value="TACO1_YebC_N"/>
</dbReference>
<dbReference type="InterPro" id="IPR002876">
    <property type="entry name" value="Transcrip_reg_TACO1-like"/>
</dbReference>
<dbReference type="InterPro" id="IPR026564">
    <property type="entry name" value="Transcrip_reg_TACO1-like_dom3"/>
</dbReference>
<dbReference type="InterPro" id="IPR029072">
    <property type="entry name" value="YebC-like"/>
</dbReference>
<dbReference type="NCBIfam" id="NF001030">
    <property type="entry name" value="PRK00110.1"/>
    <property type="match status" value="1"/>
</dbReference>
<dbReference type="NCBIfam" id="NF009044">
    <property type="entry name" value="PRK12378.1"/>
    <property type="match status" value="1"/>
</dbReference>
<dbReference type="NCBIfam" id="TIGR01033">
    <property type="entry name" value="YebC/PmpR family DNA-binding transcriptional regulator"/>
    <property type="match status" value="1"/>
</dbReference>
<dbReference type="PANTHER" id="PTHR12532:SF6">
    <property type="entry name" value="TRANSCRIPTIONAL REGULATORY PROTEIN YEBC-RELATED"/>
    <property type="match status" value="1"/>
</dbReference>
<dbReference type="PANTHER" id="PTHR12532">
    <property type="entry name" value="TRANSLATIONAL ACTIVATOR OF CYTOCHROME C OXIDASE 1"/>
    <property type="match status" value="1"/>
</dbReference>
<dbReference type="Pfam" id="PF20772">
    <property type="entry name" value="TACO1_YebC_N"/>
    <property type="match status" value="1"/>
</dbReference>
<dbReference type="Pfam" id="PF01709">
    <property type="entry name" value="Transcrip_reg"/>
    <property type="match status" value="1"/>
</dbReference>
<dbReference type="SUPFAM" id="SSF75625">
    <property type="entry name" value="YebC-like"/>
    <property type="match status" value="1"/>
</dbReference>
<keyword id="KW-0963">Cytoplasm</keyword>
<keyword id="KW-0238">DNA-binding</keyword>
<keyword id="KW-0804">Transcription</keyword>
<keyword id="KW-0805">Transcription regulation</keyword>